<evidence type="ECO:0000255" key="1">
    <source>
        <dbReference type="HAMAP-Rule" id="MF_00480"/>
    </source>
</evidence>
<evidence type="ECO:0000305" key="2"/>
<comment type="function">
    <text evidence="1">One of the primary rRNA binding proteins, it binds directly to 16S rRNA where it nucleates assembly of the head domain of the 30S subunit. Is located at the subunit interface close to the decoding center, probably blocks exit of the E-site tRNA.</text>
</comment>
<comment type="subunit">
    <text evidence="1">Part of the 30S ribosomal subunit. Contacts proteins S9 and S11.</text>
</comment>
<comment type="similarity">
    <text evidence="1">Belongs to the universal ribosomal protein uS7 family.</text>
</comment>
<sequence>MPRKGSVPKRDVLPDPIHNSKLVTKLINKIMLDGKRGTAQRILYSAFDLVEQRSGRDALEVFEEAINNIMPVLEVKARRVGGSNYQVPVEVRPERRTTLGLRWLVNYARLRGEKTMEDRLANEILDAANNTGGAVKKREDTHKMAEANKAFAHYRW</sequence>
<accession>P66615</accession>
<accession>Q99W62</accession>
<proteinExistence type="inferred from homology"/>
<organism>
    <name type="scientific">Staphylococcus aureus (strain Mu50 / ATCC 700699)</name>
    <dbReference type="NCBI Taxonomy" id="158878"/>
    <lineage>
        <taxon>Bacteria</taxon>
        <taxon>Bacillati</taxon>
        <taxon>Bacillota</taxon>
        <taxon>Bacilli</taxon>
        <taxon>Bacillales</taxon>
        <taxon>Staphylococcaceae</taxon>
        <taxon>Staphylococcus</taxon>
    </lineage>
</organism>
<reference key="1">
    <citation type="journal article" date="2001" name="Lancet">
        <title>Whole genome sequencing of meticillin-resistant Staphylococcus aureus.</title>
        <authorList>
            <person name="Kuroda M."/>
            <person name="Ohta T."/>
            <person name="Uchiyama I."/>
            <person name="Baba T."/>
            <person name="Yuzawa H."/>
            <person name="Kobayashi I."/>
            <person name="Cui L."/>
            <person name="Oguchi A."/>
            <person name="Aoki K."/>
            <person name="Nagai Y."/>
            <person name="Lian J.-Q."/>
            <person name="Ito T."/>
            <person name="Kanamori M."/>
            <person name="Matsumaru H."/>
            <person name="Maruyama A."/>
            <person name="Murakami H."/>
            <person name="Hosoyama A."/>
            <person name="Mizutani-Ui Y."/>
            <person name="Takahashi N.K."/>
            <person name="Sawano T."/>
            <person name="Inoue R."/>
            <person name="Kaito C."/>
            <person name="Sekimizu K."/>
            <person name="Hirakawa H."/>
            <person name="Kuhara S."/>
            <person name="Goto S."/>
            <person name="Yabuzaki J."/>
            <person name="Kanehisa M."/>
            <person name="Yamashita A."/>
            <person name="Oshima K."/>
            <person name="Furuya K."/>
            <person name="Yoshino C."/>
            <person name="Shiba T."/>
            <person name="Hattori M."/>
            <person name="Ogasawara N."/>
            <person name="Hayashi H."/>
            <person name="Hiramatsu K."/>
        </authorList>
    </citation>
    <scope>NUCLEOTIDE SEQUENCE [LARGE SCALE GENOMIC DNA]</scope>
    <source>
        <strain>Mu50 / ATCC 700699</strain>
    </source>
</reference>
<dbReference type="EMBL" id="BA000017">
    <property type="protein sequence ID" value="BAB56708.1"/>
    <property type="molecule type" value="Genomic_DNA"/>
</dbReference>
<dbReference type="RefSeq" id="WP_001137495.1">
    <property type="nucleotide sequence ID" value="NC_002758.2"/>
</dbReference>
<dbReference type="SMR" id="P66615"/>
<dbReference type="GeneID" id="98344880"/>
<dbReference type="KEGG" id="sav:SAV0546"/>
<dbReference type="HOGENOM" id="CLU_072226_1_1_9"/>
<dbReference type="PhylomeDB" id="P66615"/>
<dbReference type="Proteomes" id="UP000002481">
    <property type="component" value="Chromosome"/>
</dbReference>
<dbReference type="GO" id="GO:0015935">
    <property type="term" value="C:small ribosomal subunit"/>
    <property type="evidence" value="ECO:0007669"/>
    <property type="project" value="InterPro"/>
</dbReference>
<dbReference type="GO" id="GO:0019843">
    <property type="term" value="F:rRNA binding"/>
    <property type="evidence" value="ECO:0007669"/>
    <property type="project" value="UniProtKB-UniRule"/>
</dbReference>
<dbReference type="GO" id="GO:0003735">
    <property type="term" value="F:structural constituent of ribosome"/>
    <property type="evidence" value="ECO:0007669"/>
    <property type="project" value="InterPro"/>
</dbReference>
<dbReference type="GO" id="GO:0000049">
    <property type="term" value="F:tRNA binding"/>
    <property type="evidence" value="ECO:0007669"/>
    <property type="project" value="UniProtKB-UniRule"/>
</dbReference>
<dbReference type="GO" id="GO:0006412">
    <property type="term" value="P:translation"/>
    <property type="evidence" value="ECO:0007669"/>
    <property type="project" value="UniProtKB-UniRule"/>
</dbReference>
<dbReference type="CDD" id="cd14869">
    <property type="entry name" value="uS7_Bacteria"/>
    <property type="match status" value="1"/>
</dbReference>
<dbReference type="FunFam" id="1.10.455.10:FF:000001">
    <property type="entry name" value="30S ribosomal protein S7"/>
    <property type="match status" value="1"/>
</dbReference>
<dbReference type="Gene3D" id="1.10.455.10">
    <property type="entry name" value="Ribosomal protein S7 domain"/>
    <property type="match status" value="1"/>
</dbReference>
<dbReference type="HAMAP" id="MF_00480_B">
    <property type="entry name" value="Ribosomal_uS7_B"/>
    <property type="match status" value="1"/>
</dbReference>
<dbReference type="InterPro" id="IPR000235">
    <property type="entry name" value="Ribosomal_uS7"/>
</dbReference>
<dbReference type="InterPro" id="IPR005717">
    <property type="entry name" value="Ribosomal_uS7_bac/org-type"/>
</dbReference>
<dbReference type="InterPro" id="IPR020606">
    <property type="entry name" value="Ribosomal_uS7_CS"/>
</dbReference>
<dbReference type="InterPro" id="IPR023798">
    <property type="entry name" value="Ribosomal_uS7_dom"/>
</dbReference>
<dbReference type="InterPro" id="IPR036823">
    <property type="entry name" value="Ribosomal_uS7_dom_sf"/>
</dbReference>
<dbReference type="NCBIfam" id="TIGR01029">
    <property type="entry name" value="rpsG_bact"/>
    <property type="match status" value="1"/>
</dbReference>
<dbReference type="PANTHER" id="PTHR11205">
    <property type="entry name" value="RIBOSOMAL PROTEIN S7"/>
    <property type="match status" value="1"/>
</dbReference>
<dbReference type="Pfam" id="PF00177">
    <property type="entry name" value="Ribosomal_S7"/>
    <property type="match status" value="1"/>
</dbReference>
<dbReference type="PIRSF" id="PIRSF002122">
    <property type="entry name" value="RPS7p_RPS7a_RPS5e_RPS7o"/>
    <property type="match status" value="1"/>
</dbReference>
<dbReference type="SUPFAM" id="SSF47973">
    <property type="entry name" value="Ribosomal protein S7"/>
    <property type="match status" value="1"/>
</dbReference>
<dbReference type="PROSITE" id="PS00052">
    <property type="entry name" value="RIBOSOMAL_S7"/>
    <property type="match status" value="1"/>
</dbReference>
<protein>
    <recommendedName>
        <fullName evidence="1">Small ribosomal subunit protein uS7</fullName>
    </recommendedName>
    <alternativeName>
        <fullName evidence="2">30S ribosomal protein S7</fullName>
    </alternativeName>
</protein>
<gene>
    <name evidence="1" type="primary">rpsG</name>
    <name type="ordered locus">SAV0546</name>
</gene>
<keyword id="KW-0687">Ribonucleoprotein</keyword>
<keyword id="KW-0689">Ribosomal protein</keyword>
<keyword id="KW-0694">RNA-binding</keyword>
<keyword id="KW-0699">rRNA-binding</keyword>
<keyword id="KW-0820">tRNA-binding</keyword>
<name>RS7_STAAM</name>
<feature type="chain" id="PRO_0000124342" description="Small ribosomal subunit protein uS7">
    <location>
        <begin position="1"/>
        <end position="156"/>
    </location>
</feature>